<gene>
    <name evidence="1" type="primary">ispG</name>
    <name type="ordered locus">HNE_0621</name>
</gene>
<keyword id="KW-0004">4Fe-4S</keyword>
<keyword id="KW-0408">Iron</keyword>
<keyword id="KW-0411">Iron-sulfur</keyword>
<keyword id="KW-0414">Isoprene biosynthesis</keyword>
<keyword id="KW-0479">Metal-binding</keyword>
<keyword id="KW-0560">Oxidoreductase</keyword>
<keyword id="KW-1185">Reference proteome</keyword>
<organism>
    <name type="scientific">Hyphomonas neptunium (strain ATCC 15444)</name>
    <dbReference type="NCBI Taxonomy" id="228405"/>
    <lineage>
        <taxon>Bacteria</taxon>
        <taxon>Pseudomonadati</taxon>
        <taxon>Pseudomonadota</taxon>
        <taxon>Alphaproteobacteria</taxon>
        <taxon>Hyphomonadales</taxon>
        <taxon>Hyphomonadaceae</taxon>
        <taxon>Hyphomonas</taxon>
    </lineage>
</organism>
<proteinExistence type="inferred from homology"/>
<dbReference type="EC" id="1.17.7.3" evidence="1"/>
<dbReference type="EMBL" id="CP000158">
    <property type="protein sequence ID" value="ABI75644.1"/>
    <property type="molecule type" value="Genomic_DNA"/>
</dbReference>
<dbReference type="RefSeq" id="WP_011645650.1">
    <property type="nucleotide sequence ID" value="NC_008358.1"/>
</dbReference>
<dbReference type="SMR" id="Q0C4J3"/>
<dbReference type="STRING" id="228405.HNE_0621"/>
<dbReference type="KEGG" id="hne:HNE_0621"/>
<dbReference type="eggNOG" id="COG0821">
    <property type="taxonomic scope" value="Bacteria"/>
</dbReference>
<dbReference type="HOGENOM" id="CLU_042258_0_0_5"/>
<dbReference type="UniPathway" id="UPA00056">
    <property type="reaction ID" value="UER00096"/>
</dbReference>
<dbReference type="Proteomes" id="UP000001959">
    <property type="component" value="Chromosome"/>
</dbReference>
<dbReference type="GO" id="GO:0051539">
    <property type="term" value="F:4 iron, 4 sulfur cluster binding"/>
    <property type="evidence" value="ECO:0007669"/>
    <property type="project" value="UniProtKB-UniRule"/>
</dbReference>
<dbReference type="GO" id="GO:0046429">
    <property type="term" value="F:4-hydroxy-3-methylbut-2-en-1-yl diphosphate synthase activity (ferredoxin)"/>
    <property type="evidence" value="ECO:0007669"/>
    <property type="project" value="UniProtKB-UniRule"/>
</dbReference>
<dbReference type="GO" id="GO:0141197">
    <property type="term" value="F:4-hydroxy-3-methylbut-2-enyl-diphosphate synthase activity (flavodoxin)"/>
    <property type="evidence" value="ECO:0007669"/>
    <property type="project" value="UniProtKB-EC"/>
</dbReference>
<dbReference type="GO" id="GO:0005506">
    <property type="term" value="F:iron ion binding"/>
    <property type="evidence" value="ECO:0007669"/>
    <property type="project" value="InterPro"/>
</dbReference>
<dbReference type="GO" id="GO:0019288">
    <property type="term" value="P:isopentenyl diphosphate biosynthetic process, methylerythritol 4-phosphate pathway"/>
    <property type="evidence" value="ECO:0007669"/>
    <property type="project" value="UniProtKB-UniRule"/>
</dbReference>
<dbReference type="GO" id="GO:0016114">
    <property type="term" value="P:terpenoid biosynthetic process"/>
    <property type="evidence" value="ECO:0007669"/>
    <property type="project" value="InterPro"/>
</dbReference>
<dbReference type="FunFam" id="3.20.20.20:FF:000001">
    <property type="entry name" value="4-hydroxy-3-methylbut-2-en-1-yl diphosphate synthase (flavodoxin)"/>
    <property type="match status" value="1"/>
</dbReference>
<dbReference type="Gene3D" id="3.20.20.20">
    <property type="entry name" value="Dihydropteroate synthase-like"/>
    <property type="match status" value="1"/>
</dbReference>
<dbReference type="Gene3D" id="3.30.413.10">
    <property type="entry name" value="Sulfite Reductase Hemoprotein, domain 1"/>
    <property type="match status" value="1"/>
</dbReference>
<dbReference type="HAMAP" id="MF_00159">
    <property type="entry name" value="IspG"/>
    <property type="match status" value="1"/>
</dbReference>
<dbReference type="InterPro" id="IPR011005">
    <property type="entry name" value="Dihydropteroate_synth-like_sf"/>
</dbReference>
<dbReference type="InterPro" id="IPR016425">
    <property type="entry name" value="IspG_bac"/>
</dbReference>
<dbReference type="InterPro" id="IPR004588">
    <property type="entry name" value="IspG_bac-typ"/>
</dbReference>
<dbReference type="InterPro" id="IPR045854">
    <property type="entry name" value="NO2/SO3_Rdtase_4Fe4S_sf"/>
</dbReference>
<dbReference type="NCBIfam" id="TIGR00612">
    <property type="entry name" value="ispG_gcpE"/>
    <property type="match status" value="1"/>
</dbReference>
<dbReference type="NCBIfam" id="NF001540">
    <property type="entry name" value="PRK00366.1"/>
    <property type="match status" value="1"/>
</dbReference>
<dbReference type="PANTHER" id="PTHR30454">
    <property type="entry name" value="4-HYDROXY-3-METHYLBUT-2-EN-1-YL DIPHOSPHATE SYNTHASE"/>
    <property type="match status" value="1"/>
</dbReference>
<dbReference type="PANTHER" id="PTHR30454:SF0">
    <property type="entry name" value="4-HYDROXY-3-METHYLBUT-2-EN-1-YL DIPHOSPHATE SYNTHASE (FERREDOXIN), CHLOROPLASTIC"/>
    <property type="match status" value="1"/>
</dbReference>
<dbReference type="Pfam" id="PF04551">
    <property type="entry name" value="GcpE"/>
    <property type="match status" value="1"/>
</dbReference>
<dbReference type="PIRSF" id="PIRSF004640">
    <property type="entry name" value="IspG"/>
    <property type="match status" value="1"/>
</dbReference>
<dbReference type="SUPFAM" id="SSF51395">
    <property type="entry name" value="FMN-linked oxidoreductases"/>
    <property type="match status" value="1"/>
</dbReference>
<dbReference type="SUPFAM" id="SSF56014">
    <property type="entry name" value="Nitrite and sulphite reductase 4Fe-4S domain-like"/>
    <property type="match status" value="1"/>
</dbReference>
<name>ISPG_HYPNA</name>
<comment type="function">
    <text evidence="1">Converts 2C-methyl-D-erythritol 2,4-cyclodiphosphate (ME-2,4cPP) into 1-hydroxy-2-methyl-2-(E)-butenyl 4-diphosphate.</text>
</comment>
<comment type="catalytic activity">
    <reaction evidence="1">
        <text>(2E)-4-hydroxy-3-methylbut-2-enyl diphosphate + oxidized [flavodoxin] + H2O + 2 H(+) = 2-C-methyl-D-erythritol 2,4-cyclic diphosphate + reduced [flavodoxin]</text>
        <dbReference type="Rhea" id="RHEA:43604"/>
        <dbReference type="Rhea" id="RHEA-COMP:10622"/>
        <dbReference type="Rhea" id="RHEA-COMP:10623"/>
        <dbReference type="ChEBI" id="CHEBI:15377"/>
        <dbReference type="ChEBI" id="CHEBI:15378"/>
        <dbReference type="ChEBI" id="CHEBI:57618"/>
        <dbReference type="ChEBI" id="CHEBI:58210"/>
        <dbReference type="ChEBI" id="CHEBI:58483"/>
        <dbReference type="ChEBI" id="CHEBI:128753"/>
        <dbReference type="EC" id="1.17.7.3"/>
    </reaction>
</comment>
<comment type="cofactor">
    <cofactor evidence="1">
        <name>[4Fe-4S] cluster</name>
        <dbReference type="ChEBI" id="CHEBI:49883"/>
    </cofactor>
    <text evidence="1">Binds 1 [4Fe-4S] cluster.</text>
</comment>
<comment type="pathway">
    <text evidence="1">Isoprenoid biosynthesis; isopentenyl diphosphate biosynthesis via DXP pathway; isopentenyl diphosphate from 1-deoxy-D-xylulose 5-phosphate: step 5/6.</text>
</comment>
<comment type="similarity">
    <text evidence="1">Belongs to the IspG family.</text>
</comment>
<accession>Q0C4J3</accession>
<evidence type="ECO:0000255" key="1">
    <source>
        <dbReference type="HAMAP-Rule" id="MF_00159"/>
    </source>
</evidence>
<protein>
    <recommendedName>
        <fullName evidence="1">4-hydroxy-3-methylbut-2-en-1-yl diphosphate synthase (flavodoxin)</fullName>
        <ecNumber evidence="1">1.17.7.3</ecNumber>
    </recommendedName>
    <alternativeName>
        <fullName evidence="1">1-hydroxy-2-methyl-2-(E)-butenyl 4-diphosphate synthase</fullName>
    </alternativeName>
</protein>
<reference key="1">
    <citation type="journal article" date="2006" name="J. Bacteriol.">
        <title>Comparative genomic evidence for a close relationship between the dimorphic prosthecate bacteria Hyphomonas neptunium and Caulobacter crescentus.</title>
        <authorList>
            <person name="Badger J.H."/>
            <person name="Hoover T.R."/>
            <person name="Brun Y.V."/>
            <person name="Weiner R.M."/>
            <person name="Laub M.T."/>
            <person name="Alexandre G."/>
            <person name="Mrazek J."/>
            <person name="Ren Q."/>
            <person name="Paulsen I.T."/>
            <person name="Nelson K.E."/>
            <person name="Khouri H.M."/>
            <person name="Radune D."/>
            <person name="Sosa J."/>
            <person name="Dodson R.J."/>
            <person name="Sullivan S.A."/>
            <person name="Rosovitz M.J."/>
            <person name="Madupu R."/>
            <person name="Brinkac L.M."/>
            <person name="Durkin A.S."/>
            <person name="Daugherty S.C."/>
            <person name="Kothari S.P."/>
            <person name="Giglio M.G."/>
            <person name="Zhou L."/>
            <person name="Haft D.H."/>
            <person name="Selengut J.D."/>
            <person name="Davidsen T.M."/>
            <person name="Yang Q."/>
            <person name="Zafar N."/>
            <person name="Ward N.L."/>
        </authorList>
    </citation>
    <scope>NUCLEOTIDE SEQUENCE [LARGE SCALE GENOMIC DNA]</scope>
    <source>
        <strain>ATCC 15444</strain>
    </source>
</reference>
<feature type="chain" id="PRO_1000076887" description="4-hydroxy-3-methylbut-2-en-1-yl diphosphate synthase (flavodoxin)">
    <location>
        <begin position="1"/>
        <end position="380"/>
    </location>
</feature>
<feature type="binding site" evidence="1">
    <location>
        <position position="275"/>
    </location>
    <ligand>
        <name>[4Fe-4S] cluster</name>
        <dbReference type="ChEBI" id="CHEBI:49883"/>
    </ligand>
</feature>
<feature type="binding site" evidence="1">
    <location>
        <position position="278"/>
    </location>
    <ligand>
        <name>[4Fe-4S] cluster</name>
        <dbReference type="ChEBI" id="CHEBI:49883"/>
    </ligand>
</feature>
<feature type="binding site" evidence="1">
    <location>
        <position position="310"/>
    </location>
    <ligand>
        <name>[4Fe-4S] cluster</name>
        <dbReference type="ChEBI" id="CHEBI:49883"/>
    </ligand>
</feature>
<feature type="binding site" evidence="1">
    <location>
        <position position="317"/>
    </location>
    <ligand>
        <name>[4Fe-4S] cluster</name>
        <dbReference type="ChEBI" id="CHEBI:49883"/>
    </ligand>
</feature>
<sequence length="380" mass="40477">MSHNPIRPWRNIERRKSRQVRVGNLMVGGDAPIAVQTMTNTPTEDAAATIAQILRCAEAGADIVRVSCPTEESTKAMREIVKASPVPLVADIHFHYKRGIEAADAGAACLRINPGNIGSHARVKEVVAAARANGCSMRIGVNGGSLERHLLEKYGEPCPDAMVESALDHARILDDLGFYDYKISVKASDMFLTVAAYHALAEATDAPLHLGITEAGGLRTGTVKSSIGMGALLWAGIGDTIRVSLSAEPEEEVKVGFEMLKSLGLRTRGVNIVACPSCARQGFDVIRTVETLEKRLAHISEPISLSIIGCVVNGPGEASLTDLGFTGGGKESGKMFVNGRADHNVANADMVEHIVKLVEDKAARLKAQRDAEEATEVPAE</sequence>